<reference key="1">
    <citation type="journal article" date="2004" name="PLoS Biol.">
        <title>Genomic insights into methanotrophy: the complete genome sequence of Methylococcus capsulatus (Bath).</title>
        <authorList>
            <person name="Ward N.L."/>
            <person name="Larsen O."/>
            <person name="Sakwa J."/>
            <person name="Bruseth L."/>
            <person name="Khouri H.M."/>
            <person name="Durkin A.S."/>
            <person name="Dimitrov G."/>
            <person name="Jiang L."/>
            <person name="Scanlan D."/>
            <person name="Kang K.H."/>
            <person name="Lewis M.R."/>
            <person name="Nelson K.E."/>
            <person name="Methe B.A."/>
            <person name="Wu M."/>
            <person name="Heidelberg J.F."/>
            <person name="Paulsen I.T."/>
            <person name="Fouts D.E."/>
            <person name="Ravel J."/>
            <person name="Tettelin H."/>
            <person name="Ren Q."/>
            <person name="Read T.D."/>
            <person name="DeBoy R.T."/>
            <person name="Seshadri R."/>
            <person name="Salzberg S.L."/>
            <person name="Jensen H.B."/>
            <person name="Birkeland N.K."/>
            <person name="Nelson W.C."/>
            <person name="Dodson R.J."/>
            <person name="Grindhaug S.H."/>
            <person name="Holt I.E."/>
            <person name="Eidhammer I."/>
            <person name="Jonasen I."/>
            <person name="Vanaken S."/>
            <person name="Utterback T.R."/>
            <person name="Feldblyum T.V."/>
            <person name="Fraser C.M."/>
            <person name="Lillehaug J.R."/>
            <person name="Eisen J.A."/>
        </authorList>
    </citation>
    <scope>NUCLEOTIDE SEQUENCE [LARGE SCALE GENOMIC DNA]</scope>
    <source>
        <strain>ATCC 33009 / NCIMB 11132 / Bath</strain>
    </source>
</reference>
<accession>Q609G2</accession>
<protein>
    <recommendedName>
        <fullName evidence="1">Ubiquinone biosynthesis O-methyltransferase</fullName>
    </recommendedName>
    <alternativeName>
        <fullName evidence="1">2-polyprenyl-6-hydroxyphenol methylase</fullName>
        <ecNumber evidence="1">2.1.1.222</ecNumber>
    </alternativeName>
    <alternativeName>
        <fullName evidence="1">3-demethylubiquinone 3-O-methyltransferase</fullName>
        <ecNumber evidence="1">2.1.1.64</ecNumber>
    </alternativeName>
</protein>
<comment type="function">
    <text evidence="1">O-methyltransferase that catalyzes the 2 O-methylation steps in the ubiquinone biosynthetic pathway.</text>
</comment>
<comment type="catalytic activity">
    <reaction evidence="1">
        <text>a 3-demethylubiquinol + S-adenosyl-L-methionine = a ubiquinol + S-adenosyl-L-homocysteine + H(+)</text>
        <dbReference type="Rhea" id="RHEA:44380"/>
        <dbReference type="Rhea" id="RHEA-COMP:9566"/>
        <dbReference type="Rhea" id="RHEA-COMP:10914"/>
        <dbReference type="ChEBI" id="CHEBI:15378"/>
        <dbReference type="ChEBI" id="CHEBI:17976"/>
        <dbReference type="ChEBI" id="CHEBI:57856"/>
        <dbReference type="ChEBI" id="CHEBI:59789"/>
        <dbReference type="ChEBI" id="CHEBI:84422"/>
        <dbReference type="EC" id="2.1.1.64"/>
    </reaction>
</comment>
<comment type="catalytic activity">
    <reaction evidence="1">
        <text>a 3-(all-trans-polyprenyl)benzene-1,2-diol + S-adenosyl-L-methionine = a 2-methoxy-6-(all-trans-polyprenyl)phenol + S-adenosyl-L-homocysteine + H(+)</text>
        <dbReference type="Rhea" id="RHEA:31411"/>
        <dbReference type="Rhea" id="RHEA-COMP:9550"/>
        <dbReference type="Rhea" id="RHEA-COMP:9551"/>
        <dbReference type="ChEBI" id="CHEBI:15378"/>
        <dbReference type="ChEBI" id="CHEBI:57856"/>
        <dbReference type="ChEBI" id="CHEBI:59789"/>
        <dbReference type="ChEBI" id="CHEBI:62729"/>
        <dbReference type="ChEBI" id="CHEBI:62731"/>
        <dbReference type="EC" id="2.1.1.222"/>
    </reaction>
</comment>
<comment type="pathway">
    <text evidence="1">Cofactor biosynthesis; ubiquinone biosynthesis.</text>
</comment>
<comment type="similarity">
    <text evidence="1">Belongs to the methyltransferase superfamily. UbiG/COQ3 family.</text>
</comment>
<keyword id="KW-0489">Methyltransferase</keyword>
<keyword id="KW-1185">Reference proteome</keyword>
<keyword id="KW-0949">S-adenosyl-L-methionine</keyword>
<keyword id="KW-0808">Transferase</keyword>
<keyword id="KW-0831">Ubiquinone biosynthesis</keyword>
<name>UBIG_METCA</name>
<dbReference type="EC" id="2.1.1.222" evidence="1"/>
<dbReference type="EC" id="2.1.1.64" evidence="1"/>
<dbReference type="EMBL" id="AE017282">
    <property type="protein sequence ID" value="AAU92428.1"/>
    <property type="molecule type" value="Genomic_DNA"/>
</dbReference>
<dbReference type="RefSeq" id="WP_010960555.1">
    <property type="nucleotide sequence ID" value="NC_002977.6"/>
</dbReference>
<dbReference type="SMR" id="Q609G2"/>
<dbReference type="STRING" id="243233.MCA1272"/>
<dbReference type="GeneID" id="88223557"/>
<dbReference type="KEGG" id="mca:MCA1272"/>
<dbReference type="eggNOG" id="COG2227">
    <property type="taxonomic scope" value="Bacteria"/>
</dbReference>
<dbReference type="HOGENOM" id="CLU_042432_5_0_6"/>
<dbReference type="UniPathway" id="UPA00232"/>
<dbReference type="Proteomes" id="UP000006821">
    <property type="component" value="Chromosome"/>
</dbReference>
<dbReference type="GO" id="GO:0102208">
    <property type="term" value="F:2-polyprenyl-6-hydroxyphenol methylase activity"/>
    <property type="evidence" value="ECO:0007669"/>
    <property type="project" value="UniProtKB-EC"/>
</dbReference>
<dbReference type="GO" id="GO:0061542">
    <property type="term" value="F:3-demethylubiquinol 3-O-methyltransferase activity"/>
    <property type="evidence" value="ECO:0007669"/>
    <property type="project" value="UniProtKB-UniRule"/>
</dbReference>
<dbReference type="GO" id="GO:0010420">
    <property type="term" value="F:polyprenyldihydroxybenzoate methyltransferase activity"/>
    <property type="evidence" value="ECO:0007669"/>
    <property type="project" value="InterPro"/>
</dbReference>
<dbReference type="GO" id="GO:0032259">
    <property type="term" value="P:methylation"/>
    <property type="evidence" value="ECO:0007669"/>
    <property type="project" value="UniProtKB-KW"/>
</dbReference>
<dbReference type="CDD" id="cd02440">
    <property type="entry name" value="AdoMet_MTases"/>
    <property type="match status" value="1"/>
</dbReference>
<dbReference type="FunFam" id="3.40.50.150:FF:000028">
    <property type="entry name" value="Ubiquinone biosynthesis O-methyltransferase"/>
    <property type="match status" value="1"/>
</dbReference>
<dbReference type="Gene3D" id="3.40.50.150">
    <property type="entry name" value="Vaccinia Virus protein VP39"/>
    <property type="match status" value="1"/>
</dbReference>
<dbReference type="HAMAP" id="MF_00472">
    <property type="entry name" value="UbiG"/>
    <property type="match status" value="1"/>
</dbReference>
<dbReference type="InterPro" id="IPR013216">
    <property type="entry name" value="Methyltransf_11"/>
</dbReference>
<dbReference type="InterPro" id="IPR029063">
    <property type="entry name" value="SAM-dependent_MTases_sf"/>
</dbReference>
<dbReference type="InterPro" id="IPR010233">
    <property type="entry name" value="UbiG_MeTrfase"/>
</dbReference>
<dbReference type="NCBIfam" id="TIGR01983">
    <property type="entry name" value="UbiG"/>
    <property type="match status" value="1"/>
</dbReference>
<dbReference type="PANTHER" id="PTHR43464">
    <property type="entry name" value="METHYLTRANSFERASE"/>
    <property type="match status" value="1"/>
</dbReference>
<dbReference type="PANTHER" id="PTHR43464:SF19">
    <property type="entry name" value="UBIQUINONE BIOSYNTHESIS O-METHYLTRANSFERASE, MITOCHONDRIAL"/>
    <property type="match status" value="1"/>
</dbReference>
<dbReference type="Pfam" id="PF08241">
    <property type="entry name" value="Methyltransf_11"/>
    <property type="match status" value="1"/>
</dbReference>
<dbReference type="SUPFAM" id="SSF53335">
    <property type="entry name" value="S-adenosyl-L-methionine-dependent methyltransferases"/>
    <property type="match status" value="1"/>
</dbReference>
<organism>
    <name type="scientific">Methylococcus capsulatus (strain ATCC 33009 / NCIMB 11132 / Bath)</name>
    <dbReference type="NCBI Taxonomy" id="243233"/>
    <lineage>
        <taxon>Bacteria</taxon>
        <taxon>Pseudomonadati</taxon>
        <taxon>Pseudomonadota</taxon>
        <taxon>Gammaproteobacteria</taxon>
        <taxon>Methylococcales</taxon>
        <taxon>Methylococcaceae</taxon>
        <taxon>Methylococcus</taxon>
    </lineage>
</organism>
<sequence length="237" mass="25361">MATDNVHIGEIEKFGSHAHRWWDPDGELKTLHAVNPLRMQFIQAHTSLAGRKAVDVGCGGGILTEALAKAGADALGIDLSEDLLGTAEEHCRESGLTVAYRQISAEALADSQPGEFDVVTCMEMLEHVPDPASVVAACTRLAKPGGTVFFSTLNRSLKAYLLAIVGAEYLLRMIPRGTHDFASFIRPSELSRWARDGGLDLAGMEGIGYNPITGQFHLTSDIGVNYLAAFRKPAAAG</sequence>
<feature type="chain" id="PRO_0000193384" description="Ubiquinone biosynthesis O-methyltransferase">
    <location>
        <begin position="1"/>
        <end position="237"/>
    </location>
</feature>
<feature type="binding site" evidence="1">
    <location>
        <position position="38"/>
    </location>
    <ligand>
        <name>S-adenosyl-L-methionine</name>
        <dbReference type="ChEBI" id="CHEBI:59789"/>
    </ligand>
</feature>
<feature type="binding site" evidence="1">
    <location>
        <position position="57"/>
    </location>
    <ligand>
        <name>S-adenosyl-L-methionine</name>
        <dbReference type="ChEBI" id="CHEBI:59789"/>
    </ligand>
</feature>
<feature type="binding site" evidence="1">
    <location>
        <position position="78"/>
    </location>
    <ligand>
        <name>S-adenosyl-L-methionine</name>
        <dbReference type="ChEBI" id="CHEBI:59789"/>
    </ligand>
</feature>
<feature type="binding site" evidence="1">
    <location>
        <position position="122"/>
    </location>
    <ligand>
        <name>S-adenosyl-L-methionine</name>
        <dbReference type="ChEBI" id="CHEBI:59789"/>
    </ligand>
</feature>
<gene>
    <name evidence="1" type="primary">ubiG</name>
    <name type="ordered locus">MCA1272</name>
</gene>
<proteinExistence type="inferred from homology"/>
<evidence type="ECO:0000255" key="1">
    <source>
        <dbReference type="HAMAP-Rule" id="MF_00472"/>
    </source>
</evidence>